<feature type="chain" id="PRO_0000062853" description="Octanoyltransferase">
    <location>
        <begin position="1"/>
        <end position="207"/>
    </location>
</feature>
<feature type="domain" description="BPL/LPL catalytic" evidence="2">
    <location>
        <begin position="27"/>
        <end position="203"/>
    </location>
</feature>
<feature type="active site" description="Acyl-thioester intermediate" evidence="1">
    <location>
        <position position="164"/>
    </location>
</feature>
<feature type="binding site" evidence="1">
    <location>
        <begin position="66"/>
        <end position="73"/>
    </location>
    <ligand>
        <name>substrate</name>
    </ligand>
</feature>
<feature type="binding site" evidence="1">
    <location>
        <begin position="133"/>
        <end position="135"/>
    </location>
    <ligand>
        <name>substrate</name>
    </ligand>
</feature>
<feature type="binding site" evidence="1">
    <location>
        <begin position="146"/>
        <end position="148"/>
    </location>
    <ligand>
        <name>substrate</name>
    </ligand>
</feature>
<feature type="site" description="Lowers pKa of active site Cys" evidence="1">
    <location>
        <position position="130"/>
    </location>
</feature>
<sequence length="207" mass="22869">MKIIHKGLVEYLPTFEAMKTFNAGRNADTEDELWVVEHPPVFTQGLVGKPEHLLIRDDIPVVQIDRGGQITYHGPGQLVVYTMIDFKRRKTSVRNIVSALENSIIATLAEYGIEAAADPKRPGVYVGERKIASLGLRIKNGSVYHGLALNVNMDLSPFTHINPCGYAGMEMTQIADFVQPCPTPDEVAAKLTAHLETQFTPKADNNE</sequence>
<comment type="function">
    <text evidence="1">Catalyzes the transfer of endogenously produced octanoic acid from octanoyl-acyl-carrier-protein onto the lipoyl domains of lipoate-dependent enzymes. Lipoyl-ACP can also act as a substrate although octanoyl-ACP is likely to be the physiological substrate.</text>
</comment>
<comment type="catalytic activity">
    <reaction evidence="1">
        <text>octanoyl-[ACP] + L-lysyl-[protein] = N(6)-octanoyl-L-lysyl-[protein] + holo-[ACP] + H(+)</text>
        <dbReference type="Rhea" id="RHEA:17665"/>
        <dbReference type="Rhea" id="RHEA-COMP:9636"/>
        <dbReference type="Rhea" id="RHEA-COMP:9685"/>
        <dbReference type="Rhea" id="RHEA-COMP:9752"/>
        <dbReference type="Rhea" id="RHEA-COMP:9928"/>
        <dbReference type="ChEBI" id="CHEBI:15378"/>
        <dbReference type="ChEBI" id="CHEBI:29969"/>
        <dbReference type="ChEBI" id="CHEBI:64479"/>
        <dbReference type="ChEBI" id="CHEBI:78463"/>
        <dbReference type="ChEBI" id="CHEBI:78809"/>
        <dbReference type="EC" id="2.3.1.181"/>
    </reaction>
</comment>
<comment type="pathway">
    <text evidence="1">Protein modification; protein lipoylation via endogenous pathway; protein N(6)-(lipoyl)lysine from octanoyl-[acyl-carrier-protein]: step 1/2.</text>
</comment>
<comment type="subcellular location">
    <subcellularLocation>
        <location evidence="1">Cytoplasm</location>
    </subcellularLocation>
</comment>
<comment type="miscellaneous">
    <text evidence="1">In the reaction, the free carboxyl group of octanoic acid is attached via an amide linkage to the epsilon-amino group of a specific lysine residue of lipoyl domains of lipoate-dependent enzymes.</text>
</comment>
<comment type="similarity">
    <text evidence="1">Belongs to the LipB family.</text>
</comment>
<comment type="sequence caution" evidence="3">
    <conflict type="erroneous initiation">
        <sequence resource="EMBL-CDS" id="CAM08552"/>
    </conflict>
    <text>Truncated N-terminus.</text>
</comment>
<reference key="1">
    <citation type="journal article" date="2000" name="Nature">
        <title>Complete DNA sequence of a serogroup A strain of Neisseria meningitidis Z2491.</title>
        <authorList>
            <person name="Parkhill J."/>
            <person name="Achtman M."/>
            <person name="James K.D."/>
            <person name="Bentley S.D."/>
            <person name="Churcher C.M."/>
            <person name="Klee S.R."/>
            <person name="Morelli G."/>
            <person name="Basham D."/>
            <person name="Brown D."/>
            <person name="Chillingworth T."/>
            <person name="Davies R.M."/>
            <person name="Davis P."/>
            <person name="Devlin K."/>
            <person name="Feltwell T."/>
            <person name="Hamlin N."/>
            <person name="Holroyd S."/>
            <person name="Jagels K."/>
            <person name="Leather S."/>
            <person name="Moule S."/>
            <person name="Mungall K.L."/>
            <person name="Quail M.A."/>
            <person name="Rajandream M.A."/>
            <person name="Rutherford K.M."/>
            <person name="Simmonds M."/>
            <person name="Skelton J."/>
            <person name="Whitehead S."/>
            <person name="Spratt B.G."/>
            <person name="Barrell B.G."/>
        </authorList>
    </citation>
    <scope>NUCLEOTIDE SEQUENCE [LARGE SCALE GENOMIC DNA]</scope>
    <source>
        <strain>DSM 15465 / Z2491</strain>
    </source>
</reference>
<keyword id="KW-0012">Acyltransferase</keyword>
<keyword id="KW-0963">Cytoplasm</keyword>
<keyword id="KW-0808">Transferase</keyword>
<gene>
    <name evidence="1" type="primary">lipB</name>
    <name type="ordered locus">NMA1379</name>
</gene>
<accession>Q9JUC7</accession>
<accession>A1IS04</accession>
<evidence type="ECO:0000255" key="1">
    <source>
        <dbReference type="HAMAP-Rule" id="MF_00013"/>
    </source>
</evidence>
<evidence type="ECO:0000255" key="2">
    <source>
        <dbReference type="PROSITE-ProRule" id="PRU01067"/>
    </source>
</evidence>
<evidence type="ECO:0000305" key="3"/>
<dbReference type="EC" id="2.3.1.181" evidence="1"/>
<dbReference type="EMBL" id="AL157959">
    <property type="protein sequence ID" value="CAM08552.1"/>
    <property type="status" value="ALT_INIT"/>
    <property type="molecule type" value="Genomic_DNA"/>
</dbReference>
<dbReference type="RefSeq" id="WP_002219258.1">
    <property type="nucleotide sequence ID" value="NC_003116.1"/>
</dbReference>
<dbReference type="SMR" id="Q9JUC7"/>
<dbReference type="EnsemblBacteria" id="CAM08552">
    <property type="protein sequence ID" value="CAM08552"/>
    <property type="gene ID" value="NMA1379"/>
</dbReference>
<dbReference type="GeneID" id="93386016"/>
<dbReference type="KEGG" id="nma:NMA1379"/>
<dbReference type="HOGENOM" id="CLU_035168_3_1_4"/>
<dbReference type="UniPathway" id="UPA00538">
    <property type="reaction ID" value="UER00592"/>
</dbReference>
<dbReference type="Proteomes" id="UP000000626">
    <property type="component" value="Chromosome"/>
</dbReference>
<dbReference type="GO" id="GO:0005737">
    <property type="term" value="C:cytoplasm"/>
    <property type="evidence" value="ECO:0007669"/>
    <property type="project" value="UniProtKB-SubCell"/>
</dbReference>
<dbReference type="GO" id="GO:0033819">
    <property type="term" value="F:lipoyl(octanoyl) transferase activity"/>
    <property type="evidence" value="ECO:0007669"/>
    <property type="project" value="UniProtKB-EC"/>
</dbReference>
<dbReference type="GO" id="GO:0036211">
    <property type="term" value="P:protein modification process"/>
    <property type="evidence" value="ECO:0007669"/>
    <property type="project" value="InterPro"/>
</dbReference>
<dbReference type="CDD" id="cd16444">
    <property type="entry name" value="LipB"/>
    <property type="match status" value="1"/>
</dbReference>
<dbReference type="FunFam" id="3.30.930.10:FF:000020">
    <property type="entry name" value="Octanoyltransferase"/>
    <property type="match status" value="1"/>
</dbReference>
<dbReference type="Gene3D" id="3.30.930.10">
    <property type="entry name" value="Bira Bifunctional Protein, Domain 2"/>
    <property type="match status" value="1"/>
</dbReference>
<dbReference type="HAMAP" id="MF_00013">
    <property type="entry name" value="LipB"/>
    <property type="match status" value="1"/>
</dbReference>
<dbReference type="InterPro" id="IPR045864">
    <property type="entry name" value="aa-tRNA-synth_II/BPL/LPL"/>
</dbReference>
<dbReference type="InterPro" id="IPR004143">
    <property type="entry name" value="BPL_LPL_catalytic"/>
</dbReference>
<dbReference type="InterPro" id="IPR000544">
    <property type="entry name" value="Octanoyltransferase"/>
</dbReference>
<dbReference type="InterPro" id="IPR020605">
    <property type="entry name" value="Octanoyltransferase_CS"/>
</dbReference>
<dbReference type="NCBIfam" id="TIGR00214">
    <property type="entry name" value="lipB"/>
    <property type="match status" value="1"/>
</dbReference>
<dbReference type="NCBIfam" id="NF010922">
    <property type="entry name" value="PRK14342.1"/>
    <property type="match status" value="1"/>
</dbReference>
<dbReference type="PANTHER" id="PTHR10993:SF7">
    <property type="entry name" value="LIPOYLTRANSFERASE 2, MITOCHONDRIAL-RELATED"/>
    <property type="match status" value="1"/>
</dbReference>
<dbReference type="PANTHER" id="PTHR10993">
    <property type="entry name" value="OCTANOYLTRANSFERASE"/>
    <property type="match status" value="1"/>
</dbReference>
<dbReference type="Pfam" id="PF21948">
    <property type="entry name" value="LplA-B_cat"/>
    <property type="match status" value="1"/>
</dbReference>
<dbReference type="PIRSF" id="PIRSF016262">
    <property type="entry name" value="LPLase"/>
    <property type="match status" value="1"/>
</dbReference>
<dbReference type="SUPFAM" id="SSF55681">
    <property type="entry name" value="Class II aaRS and biotin synthetases"/>
    <property type="match status" value="1"/>
</dbReference>
<dbReference type="PROSITE" id="PS51733">
    <property type="entry name" value="BPL_LPL_CATALYTIC"/>
    <property type="match status" value="1"/>
</dbReference>
<dbReference type="PROSITE" id="PS01313">
    <property type="entry name" value="LIPB"/>
    <property type="match status" value="1"/>
</dbReference>
<organism>
    <name type="scientific">Neisseria meningitidis serogroup A / serotype 4A (strain DSM 15465 / Z2491)</name>
    <dbReference type="NCBI Taxonomy" id="122587"/>
    <lineage>
        <taxon>Bacteria</taxon>
        <taxon>Pseudomonadati</taxon>
        <taxon>Pseudomonadota</taxon>
        <taxon>Betaproteobacteria</taxon>
        <taxon>Neisseriales</taxon>
        <taxon>Neisseriaceae</taxon>
        <taxon>Neisseria</taxon>
    </lineage>
</organism>
<protein>
    <recommendedName>
        <fullName evidence="1">Octanoyltransferase</fullName>
        <ecNumber evidence="1">2.3.1.181</ecNumber>
    </recommendedName>
    <alternativeName>
        <fullName evidence="1">Lipoate-protein ligase B</fullName>
    </alternativeName>
    <alternativeName>
        <fullName evidence="1">Lipoyl/octanoyl transferase</fullName>
    </alternativeName>
    <alternativeName>
        <fullName evidence="1">Octanoyl-[acyl-carrier-protein]-protein N-octanoyltransferase</fullName>
    </alternativeName>
</protein>
<name>LIPB_NEIMA</name>
<proteinExistence type="inferred from homology"/>